<accession>Q98PE4</accession>
<dbReference type="EC" id="3.4.24.-" evidence="1"/>
<dbReference type="EMBL" id="AL445565">
    <property type="protein sequence ID" value="CAC13952.1"/>
    <property type="molecule type" value="Genomic_DNA"/>
</dbReference>
<dbReference type="PIR" id="C90609">
    <property type="entry name" value="C90609"/>
</dbReference>
<dbReference type="RefSeq" id="WP_010925579.1">
    <property type="nucleotide sequence ID" value="NC_002771.1"/>
</dbReference>
<dbReference type="SMR" id="Q98PE4"/>
<dbReference type="STRING" id="272635.gene:17577390"/>
<dbReference type="KEGG" id="mpu:MYPU_7790"/>
<dbReference type="eggNOG" id="COG0465">
    <property type="taxonomic scope" value="Bacteria"/>
</dbReference>
<dbReference type="HOGENOM" id="CLU_000688_16_2_14"/>
<dbReference type="Proteomes" id="UP000000528">
    <property type="component" value="Chromosome"/>
</dbReference>
<dbReference type="GO" id="GO:0005886">
    <property type="term" value="C:plasma membrane"/>
    <property type="evidence" value="ECO:0007669"/>
    <property type="project" value="UniProtKB-SubCell"/>
</dbReference>
<dbReference type="GO" id="GO:0005524">
    <property type="term" value="F:ATP binding"/>
    <property type="evidence" value="ECO:0007669"/>
    <property type="project" value="UniProtKB-UniRule"/>
</dbReference>
<dbReference type="GO" id="GO:0016887">
    <property type="term" value="F:ATP hydrolysis activity"/>
    <property type="evidence" value="ECO:0007669"/>
    <property type="project" value="UniProtKB-UniRule"/>
</dbReference>
<dbReference type="GO" id="GO:0004176">
    <property type="term" value="F:ATP-dependent peptidase activity"/>
    <property type="evidence" value="ECO:0007669"/>
    <property type="project" value="InterPro"/>
</dbReference>
<dbReference type="GO" id="GO:0004222">
    <property type="term" value="F:metalloendopeptidase activity"/>
    <property type="evidence" value="ECO:0007669"/>
    <property type="project" value="InterPro"/>
</dbReference>
<dbReference type="GO" id="GO:0008270">
    <property type="term" value="F:zinc ion binding"/>
    <property type="evidence" value="ECO:0007669"/>
    <property type="project" value="UniProtKB-UniRule"/>
</dbReference>
<dbReference type="GO" id="GO:0030163">
    <property type="term" value="P:protein catabolic process"/>
    <property type="evidence" value="ECO:0007669"/>
    <property type="project" value="UniProtKB-UniRule"/>
</dbReference>
<dbReference type="GO" id="GO:0006508">
    <property type="term" value="P:proteolysis"/>
    <property type="evidence" value="ECO:0007669"/>
    <property type="project" value="UniProtKB-KW"/>
</dbReference>
<dbReference type="CDD" id="cd19501">
    <property type="entry name" value="RecA-like_FtsH"/>
    <property type="match status" value="1"/>
</dbReference>
<dbReference type="FunFam" id="1.10.8.60:FF:000001">
    <property type="entry name" value="ATP-dependent zinc metalloprotease FtsH"/>
    <property type="match status" value="1"/>
</dbReference>
<dbReference type="FunFam" id="1.20.58.760:FF:000001">
    <property type="entry name" value="ATP-dependent zinc metalloprotease FtsH"/>
    <property type="match status" value="1"/>
</dbReference>
<dbReference type="FunFam" id="3.40.50.300:FF:000001">
    <property type="entry name" value="ATP-dependent zinc metalloprotease FtsH"/>
    <property type="match status" value="1"/>
</dbReference>
<dbReference type="Gene3D" id="1.10.8.60">
    <property type="match status" value="1"/>
</dbReference>
<dbReference type="Gene3D" id="3.40.50.300">
    <property type="entry name" value="P-loop containing nucleotide triphosphate hydrolases"/>
    <property type="match status" value="1"/>
</dbReference>
<dbReference type="Gene3D" id="1.20.58.760">
    <property type="entry name" value="Peptidase M41"/>
    <property type="match status" value="1"/>
</dbReference>
<dbReference type="HAMAP" id="MF_01458">
    <property type="entry name" value="FtsH"/>
    <property type="match status" value="1"/>
</dbReference>
<dbReference type="InterPro" id="IPR003593">
    <property type="entry name" value="AAA+_ATPase"/>
</dbReference>
<dbReference type="InterPro" id="IPR041569">
    <property type="entry name" value="AAA_lid_3"/>
</dbReference>
<dbReference type="InterPro" id="IPR003959">
    <property type="entry name" value="ATPase_AAA_core"/>
</dbReference>
<dbReference type="InterPro" id="IPR003960">
    <property type="entry name" value="ATPase_AAA_CS"/>
</dbReference>
<dbReference type="InterPro" id="IPR005936">
    <property type="entry name" value="FtsH"/>
</dbReference>
<dbReference type="InterPro" id="IPR027417">
    <property type="entry name" value="P-loop_NTPase"/>
</dbReference>
<dbReference type="InterPro" id="IPR000642">
    <property type="entry name" value="Peptidase_M41"/>
</dbReference>
<dbReference type="InterPro" id="IPR037219">
    <property type="entry name" value="Peptidase_M41-like"/>
</dbReference>
<dbReference type="NCBIfam" id="TIGR01241">
    <property type="entry name" value="FtsH_fam"/>
    <property type="match status" value="1"/>
</dbReference>
<dbReference type="PANTHER" id="PTHR23076:SF97">
    <property type="entry name" value="ATP-DEPENDENT ZINC METALLOPROTEASE YME1L1"/>
    <property type="match status" value="1"/>
</dbReference>
<dbReference type="PANTHER" id="PTHR23076">
    <property type="entry name" value="METALLOPROTEASE M41 FTSH"/>
    <property type="match status" value="1"/>
</dbReference>
<dbReference type="Pfam" id="PF00004">
    <property type="entry name" value="AAA"/>
    <property type="match status" value="1"/>
</dbReference>
<dbReference type="Pfam" id="PF17862">
    <property type="entry name" value="AAA_lid_3"/>
    <property type="match status" value="1"/>
</dbReference>
<dbReference type="Pfam" id="PF01434">
    <property type="entry name" value="Peptidase_M41"/>
    <property type="match status" value="1"/>
</dbReference>
<dbReference type="SMART" id="SM00382">
    <property type="entry name" value="AAA"/>
    <property type="match status" value="1"/>
</dbReference>
<dbReference type="SUPFAM" id="SSF140990">
    <property type="entry name" value="FtsH protease domain-like"/>
    <property type="match status" value="1"/>
</dbReference>
<dbReference type="SUPFAM" id="SSF52540">
    <property type="entry name" value="P-loop containing nucleoside triphosphate hydrolases"/>
    <property type="match status" value="1"/>
</dbReference>
<dbReference type="PROSITE" id="PS00674">
    <property type="entry name" value="AAA"/>
    <property type="match status" value="1"/>
</dbReference>
<keyword id="KW-0067">ATP-binding</keyword>
<keyword id="KW-1003">Cell membrane</keyword>
<keyword id="KW-0378">Hydrolase</keyword>
<keyword id="KW-0472">Membrane</keyword>
<keyword id="KW-0479">Metal-binding</keyword>
<keyword id="KW-0482">Metalloprotease</keyword>
<keyword id="KW-0547">Nucleotide-binding</keyword>
<keyword id="KW-0645">Protease</keyword>
<keyword id="KW-1185">Reference proteome</keyword>
<keyword id="KW-0812">Transmembrane</keyword>
<keyword id="KW-1133">Transmembrane helix</keyword>
<keyword id="KW-0862">Zinc</keyword>
<protein>
    <recommendedName>
        <fullName evidence="1">ATP-dependent zinc metalloprotease FtsH</fullName>
        <ecNumber evidence="1">3.4.24.-</ecNumber>
    </recommendedName>
</protein>
<sequence length="725" mass="80049">MDKMKKPKINWLLIVIVGIIAALLITVLVLLFSPKTQPKSFDYLLKHFEEAAKSTTDDIYFETIKINSLDNTIGVIFRNGAMREEYFVAASAAQANFLTSGNVEVREILQLANVQAYIQSIKTLNGTISWFTFMNKFLAQHPGYDASKAGLFGQHIVQENGFITFIKAIWFPALIAIIIFLGYKAQSRAASGGIFNPGKNQAVIVKTDKKFTDIAGNKEPIEEVQELVDYLKNPKKYAAAGARFPKGILLGGPPGTGKTLLAKATAGEANVPFFFISASSFVELYVGLGAKRVREMFKEARKLAPAIIFIDELDAVGRSRGSGIGGGNDEREQTLNQILVEMDGINENAGILIMGATNRTDVLDPALLRPGRFDRIITVGLPDIKEREEILKLHSKGKRLSKEIKFDKIAKRTPGYSGAQLENVINEASLLSVREKTDVIISTQIDEAIDRVMAGPAKKSRVISQEELKAVAYHEAGHAVVGLKVKGGNKVQKITIIPRGNAGGYNLMTPEEEKYNASKKELLATIASYMGGRAAEMIIYGKENISTGASDDISRATKIARKMVTEWGMSALGPIKYEEDTENPFLGRDYSKGTFGSKMAHEIDLEIRKIISASEEIAIKAIEQNLELLELIKDSLLENETIVAEEIEYIEKNMKLPPNNEKIKPDGESKKVNIEDLINQVNESQEKDKQKNAQIKEDLSKMDKKDNLTKAKDKGEEETLAEKAE</sequence>
<organism>
    <name type="scientific">Mycoplasmopsis pulmonis (strain UAB CTIP)</name>
    <name type="common">Mycoplasma pulmonis</name>
    <dbReference type="NCBI Taxonomy" id="272635"/>
    <lineage>
        <taxon>Bacteria</taxon>
        <taxon>Bacillati</taxon>
        <taxon>Mycoplasmatota</taxon>
        <taxon>Mycoplasmoidales</taxon>
        <taxon>Metamycoplasmataceae</taxon>
        <taxon>Mycoplasmopsis</taxon>
    </lineage>
</organism>
<evidence type="ECO:0000255" key="1">
    <source>
        <dbReference type="HAMAP-Rule" id="MF_01458"/>
    </source>
</evidence>
<evidence type="ECO:0000256" key="2">
    <source>
        <dbReference type="SAM" id="MobiDB-lite"/>
    </source>
</evidence>
<feature type="chain" id="PRO_0000084641" description="ATP-dependent zinc metalloprotease FtsH">
    <location>
        <begin position="1"/>
        <end position="725"/>
    </location>
</feature>
<feature type="topological domain" description="Cytoplasmic" evidence="1">
    <location>
        <begin position="1"/>
        <end position="11"/>
    </location>
</feature>
<feature type="transmembrane region" description="Helical" evidence="1">
    <location>
        <begin position="12"/>
        <end position="32"/>
    </location>
</feature>
<feature type="topological domain" description="Extracellular" evidence="1">
    <location>
        <begin position="33"/>
        <end position="160"/>
    </location>
</feature>
<feature type="transmembrane region" description="Helical" evidence="1">
    <location>
        <begin position="161"/>
        <end position="181"/>
    </location>
</feature>
<feature type="topological domain" description="Cytoplasmic" evidence="1">
    <location>
        <begin position="182"/>
        <end position="725"/>
    </location>
</feature>
<feature type="region of interest" description="Disordered" evidence="2">
    <location>
        <begin position="680"/>
        <end position="725"/>
    </location>
</feature>
<feature type="compositionally biased region" description="Basic and acidic residues" evidence="2">
    <location>
        <begin position="684"/>
        <end position="725"/>
    </location>
</feature>
<feature type="active site" evidence="1">
    <location>
        <position position="475"/>
    </location>
</feature>
<feature type="binding site" evidence="1">
    <location>
        <begin position="252"/>
        <end position="259"/>
    </location>
    <ligand>
        <name>ATP</name>
        <dbReference type="ChEBI" id="CHEBI:30616"/>
    </ligand>
</feature>
<feature type="binding site" evidence="1">
    <location>
        <position position="474"/>
    </location>
    <ligand>
        <name>Zn(2+)</name>
        <dbReference type="ChEBI" id="CHEBI:29105"/>
        <note>catalytic</note>
    </ligand>
</feature>
<feature type="binding site" evidence="1">
    <location>
        <position position="478"/>
    </location>
    <ligand>
        <name>Zn(2+)</name>
        <dbReference type="ChEBI" id="CHEBI:29105"/>
        <note>catalytic</note>
    </ligand>
</feature>
<feature type="binding site" evidence="1">
    <location>
        <position position="552"/>
    </location>
    <ligand>
        <name>Zn(2+)</name>
        <dbReference type="ChEBI" id="CHEBI:29105"/>
        <note>catalytic</note>
    </ligand>
</feature>
<comment type="function">
    <text evidence="1">Acts as a processive, ATP-dependent zinc metallopeptidase for both cytoplasmic and membrane proteins. Plays a role in the quality control of integral membrane proteins.</text>
</comment>
<comment type="cofactor">
    <cofactor evidence="1">
        <name>Zn(2+)</name>
        <dbReference type="ChEBI" id="CHEBI:29105"/>
    </cofactor>
    <text evidence="1">Binds 1 zinc ion per subunit.</text>
</comment>
<comment type="subunit">
    <text evidence="1">Homohexamer.</text>
</comment>
<comment type="subcellular location">
    <subcellularLocation>
        <location evidence="1">Cell membrane</location>
        <topology evidence="1">Multi-pass membrane protein</topology>
        <orientation evidence="1">Cytoplasmic side</orientation>
    </subcellularLocation>
</comment>
<comment type="similarity">
    <text evidence="1">In the central section; belongs to the AAA ATPase family.</text>
</comment>
<comment type="similarity">
    <text evidence="1">In the C-terminal section; belongs to the peptidase M41 family.</text>
</comment>
<proteinExistence type="inferred from homology"/>
<reference key="1">
    <citation type="journal article" date="2001" name="Nucleic Acids Res.">
        <title>The complete genome sequence of the murine respiratory pathogen Mycoplasma pulmonis.</title>
        <authorList>
            <person name="Chambaud I."/>
            <person name="Heilig R."/>
            <person name="Ferris S."/>
            <person name="Barbe V."/>
            <person name="Samson D."/>
            <person name="Galisson F."/>
            <person name="Moszer I."/>
            <person name="Dybvig K."/>
            <person name="Wroblewski H."/>
            <person name="Viari A."/>
            <person name="Rocha E.P.C."/>
            <person name="Blanchard A."/>
        </authorList>
    </citation>
    <scope>NUCLEOTIDE SEQUENCE [LARGE SCALE GENOMIC DNA]</scope>
    <source>
        <strain>UAB CTIP</strain>
    </source>
</reference>
<gene>
    <name evidence="1" type="primary">ftsH</name>
    <name type="ordered locus">MYPU_7790</name>
</gene>
<name>FTSH_MYCPU</name>